<proteinExistence type="inferred from homology"/>
<sequence length="364" mass="39656">MANKTILFNKHLESNAKMVDFHGWDMPLNYGSQIEEHNAVRQDAGMFDVSHMTVVDVIGNDACAFLRKLLANDVAKLKVPGKALYGGMLDENAGVIDDLITYYLTDTNYRVVVNSATREKDLAWIAKQSQGFDVTVTERPELAMIAVQGPNAKAKAAAVLSAEQNAAIEGMKPFFGKQAGSLFIATTGYTGEAGYEIIVPEDEAQAMWQALLDQGVKPCGLGARDTLRLEAGMNLYGLDMDETINPLAANMGWTIAWEPSDRDFIGRKALETLRDAGTDKLVGLVMEEKGVLRHDMPVFFTDSAGVEHQGVITSGTFSPTLGYSIAMARVPNSIGDTAEVEMRKKRVAVRVVAPNFVRNGKQAF</sequence>
<gene>
    <name evidence="1" type="primary">gcvT</name>
    <name type="ordered locus">Sbal195_3801</name>
</gene>
<comment type="function">
    <text evidence="1">The glycine cleavage system catalyzes the degradation of glycine.</text>
</comment>
<comment type="catalytic activity">
    <reaction evidence="1">
        <text>N(6)-[(R)-S(8)-aminomethyldihydrolipoyl]-L-lysyl-[protein] + (6S)-5,6,7,8-tetrahydrofolate = N(6)-[(R)-dihydrolipoyl]-L-lysyl-[protein] + (6R)-5,10-methylene-5,6,7,8-tetrahydrofolate + NH4(+)</text>
        <dbReference type="Rhea" id="RHEA:16945"/>
        <dbReference type="Rhea" id="RHEA-COMP:10475"/>
        <dbReference type="Rhea" id="RHEA-COMP:10492"/>
        <dbReference type="ChEBI" id="CHEBI:15636"/>
        <dbReference type="ChEBI" id="CHEBI:28938"/>
        <dbReference type="ChEBI" id="CHEBI:57453"/>
        <dbReference type="ChEBI" id="CHEBI:83100"/>
        <dbReference type="ChEBI" id="CHEBI:83143"/>
        <dbReference type="EC" id="2.1.2.10"/>
    </reaction>
</comment>
<comment type="subunit">
    <text evidence="1">The glycine cleavage system is composed of four proteins: P, T, L and H.</text>
</comment>
<comment type="similarity">
    <text evidence="1">Belongs to the GcvT family.</text>
</comment>
<reference key="1">
    <citation type="submission" date="2007-11" db="EMBL/GenBank/DDBJ databases">
        <title>Complete sequence of chromosome of Shewanella baltica OS195.</title>
        <authorList>
            <consortium name="US DOE Joint Genome Institute"/>
            <person name="Copeland A."/>
            <person name="Lucas S."/>
            <person name="Lapidus A."/>
            <person name="Barry K."/>
            <person name="Glavina del Rio T."/>
            <person name="Dalin E."/>
            <person name="Tice H."/>
            <person name="Pitluck S."/>
            <person name="Chain P."/>
            <person name="Malfatti S."/>
            <person name="Shin M."/>
            <person name="Vergez L."/>
            <person name="Schmutz J."/>
            <person name="Larimer F."/>
            <person name="Land M."/>
            <person name="Hauser L."/>
            <person name="Kyrpides N."/>
            <person name="Kim E."/>
            <person name="Brettar I."/>
            <person name="Rodrigues J."/>
            <person name="Konstantinidis K."/>
            <person name="Klappenbach J."/>
            <person name="Hofle M."/>
            <person name="Tiedje J."/>
            <person name="Richardson P."/>
        </authorList>
    </citation>
    <scope>NUCLEOTIDE SEQUENCE [LARGE SCALE GENOMIC DNA]</scope>
    <source>
        <strain>OS195</strain>
    </source>
</reference>
<feature type="chain" id="PRO_1000078591" description="Aminomethyltransferase">
    <location>
        <begin position="1"/>
        <end position="364"/>
    </location>
</feature>
<keyword id="KW-0032">Aminotransferase</keyword>
<keyword id="KW-0808">Transferase</keyword>
<name>GCST_SHEB9</name>
<protein>
    <recommendedName>
        <fullName evidence="1">Aminomethyltransferase</fullName>
        <ecNumber evidence="1">2.1.2.10</ecNumber>
    </recommendedName>
    <alternativeName>
        <fullName evidence="1">Glycine cleavage system T protein</fullName>
    </alternativeName>
</protein>
<organism>
    <name type="scientific">Shewanella baltica (strain OS195)</name>
    <dbReference type="NCBI Taxonomy" id="399599"/>
    <lineage>
        <taxon>Bacteria</taxon>
        <taxon>Pseudomonadati</taxon>
        <taxon>Pseudomonadota</taxon>
        <taxon>Gammaproteobacteria</taxon>
        <taxon>Alteromonadales</taxon>
        <taxon>Shewanellaceae</taxon>
        <taxon>Shewanella</taxon>
    </lineage>
</organism>
<dbReference type="EC" id="2.1.2.10" evidence="1"/>
<dbReference type="EMBL" id="CP000891">
    <property type="protein sequence ID" value="ABX50961.1"/>
    <property type="molecule type" value="Genomic_DNA"/>
</dbReference>
<dbReference type="RefSeq" id="WP_006084135.1">
    <property type="nucleotide sequence ID" value="NC_009997.1"/>
</dbReference>
<dbReference type="SMR" id="A9L332"/>
<dbReference type="GeneID" id="11773817"/>
<dbReference type="KEGG" id="sbn:Sbal195_3801"/>
<dbReference type="HOGENOM" id="CLU_007884_10_2_6"/>
<dbReference type="Proteomes" id="UP000000770">
    <property type="component" value="Chromosome"/>
</dbReference>
<dbReference type="GO" id="GO:0005829">
    <property type="term" value="C:cytosol"/>
    <property type="evidence" value="ECO:0007669"/>
    <property type="project" value="TreeGrafter"/>
</dbReference>
<dbReference type="GO" id="GO:0005960">
    <property type="term" value="C:glycine cleavage complex"/>
    <property type="evidence" value="ECO:0007669"/>
    <property type="project" value="InterPro"/>
</dbReference>
<dbReference type="GO" id="GO:0004047">
    <property type="term" value="F:aminomethyltransferase activity"/>
    <property type="evidence" value="ECO:0007669"/>
    <property type="project" value="UniProtKB-UniRule"/>
</dbReference>
<dbReference type="GO" id="GO:0008483">
    <property type="term" value="F:transaminase activity"/>
    <property type="evidence" value="ECO:0007669"/>
    <property type="project" value="UniProtKB-KW"/>
</dbReference>
<dbReference type="GO" id="GO:0019464">
    <property type="term" value="P:glycine decarboxylation via glycine cleavage system"/>
    <property type="evidence" value="ECO:0007669"/>
    <property type="project" value="UniProtKB-UniRule"/>
</dbReference>
<dbReference type="FunFam" id="2.40.30.110:FF:000001">
    <property type="entry name" value="Aminomethyltransferase"/>
    <property type="match status" value="1"/>
</dbReference>
<dbReference type="FunFam" id="3.30.70.1400:FF:000001">
    <property type="entry name" value="Aminomethyltransferase"/>
    <property type="match status" value="1"/>
</dbReference>
<dbReference type="FunFam" id="4.10.1250.10:FF:000001">
    <property type="entry name" value="Aminomethyltransferase"/>
    <property type="match status" value="1"/>
</dbReference>
<dbReference type="Gene3D" id="2.40.30.110">
    <property type="entry name" value="Aminomethyltransferase beta-barrel domains"/>
    <property type="match status" value="1"/>
</dbReference>
<dbReference type="Gene3D" id="3.30.70.1400">
    <property type="entry name" value="Aminomethyltransferase beta-barrel domains"/>
    <property type="match status" value="1"/>
</dbReference>
<dbReference type="Gene3D" id="4.10.1250.10">
    <property type="entry name" value="Aminomethyltransferase fragment"/>
    <property type="match status" value="1"/>
</dbReference>
<dbReference type="Gene3D" id="3.30.1360.120">
    <property type="entry name" value="Probable tRNA modification gtpase trme, domain 1"/>
    <property type="match status" value="1"/>
</dbReference>
<dbReference type="HAMAP" id="MF_00259">
    <property type="entry name" value="GcvT"/>
    <property type="match status" value="1"/>
</dbReference>
<dbReference type="InterPro" id="IPR006223">
    <property type="entry name" value="GCS_T"/>
</dbReference>
<dbReference type="InterPro" id="IPR022903">
    <property type="entry name" value="GCS_T_bac"/>
</dbReference>
<dbReference type="InterPro" id="IPR013977">
    <property type="entry name" value="GCST_C"/>
</dbReference>
<dbReference type="InterPro" id="IPR006222">
    <property type="entry name" value="GCV_T_N"/>
</dbReference>
<dbReference type="InterPro" id="IPR028896">
    <property type="entry name" value="GcvT/YgfZ/DmdA"/>
</dbReference>
<dbReference type="InterPro" id="IPR029043">
    <property type="entry name" value="GcvT/YgfZ_C"/>
</dbReference>
<dbReference type="InterPro" id="IPR027266">
    <property type="entry name" value="TrmE/GcvT_dom1"/>
</dbReference>
<dbReference type="NCBIfam" id="TIGR00528">
    <property type="entry name" value="gcvT"/>
    <property type="match status" value="1"/>
</dbReference>
<dbReference type="NCBIfam" id="NF001567">
    <property type="entry name" value="PRK00389.1"/>
    <property type="match status" value="1"/>
</dbReference>
<dbReference type="PANTHER" id="PTHR43757">
    <property type="entry name" value="AMINOMETHYLTRANSFERASE"/>
    <property type="match status" value="1"/>
</dbReference>
<dbReference type="PANTHER" id="PTHR43757:SF2">
    <property type="entry name" value="AMINOMETHYLTRANSFERASE, MITOCHONDRIAL"/>
    <property type="match status" value="1"/>
</dbReference>
<dbReference type="Pfam" id="PF01571">
    <property type="entry name" value="GCV_T"/>
    <property type="match status" value="1"/>
</dbReference>
<dbReference type="Pfam" id="PF08669">
    <property type="entry name" value="GCV_T_C"/>
    <property type="match status" value="1"/>
</dbReference>
<dbReference type="PIRSF" id="PIRSF006487">
    <property type="entry name" value="GcvT"/>
    <property type="match status" value="1"/>
</dbReference>
<dbReference type="SUPFAM" id="SSF101790">
    <property type="entry name" value="Aminomethyltransferase beta-barrel domain"/>
    <property type="match status" value="1"/>
</dbReference>
<dbReference type="SUPFAM" id="SSF103025">
    <property type="entry name" value="Folate-binding domain"/>
    <property type="match status" value="1"/>
</dbReference>
<accession>A9L332</accession>
<evidence type="ECO:0000255" key="1">
    <source>
        <dbReference type="HAMAP-Rule" id="MF_00259"/>
    </source>
</evidence>